<comment type="function">
    <text evidence="1">NDH-1 shuttles electrons from NADH, via FMN and iron-sulfur (Fe-S) centers, to quinones in the respiratory chain. The immediate electron acceptor for the enzyme in this species is believed to be a menaquinone. Couples the redox reaction to proton translocation (for every two electrons transferred, four hydrogen ions are translocated across the cytoplasmic membrane), and thus conserves the redox energy in a proton gradient.</text>
</comment>
<comment type="catalytic activity">
    <reaction evidence="1">
        <text>a quinone + NADH + 5 H(+)(in) = a quinol + NAD(+) + 4 H(+)(out)</text>
        <dbReference type="Rhea" id="RHEA:57888"/>
        <dbReference type="ChEBI" id="CHEBI:15378"/>
        <dbReference type="ChEBI" id="CHEBI:24646"/>
        <dbReference type="ChEBI" id="CHEBI:57540"/>
        <dbReference type="ChEBI" id="CHEBI:57945"/>
        <dbReference type="ChEBI" id="CHEBI:132124"/>
    </reaction>
</comment>
<comment type="subunit">
    <text evidence="1">NDH-1 is composed of 14 different subunits. Subunits NuoB, C, D, E, F, and G constitute the peripheral sector of the complex.</text>
</comment>
<comment type="subcellular location">
    <subcellularLocation>
        <location evidence="1">Cell inner membrane</location>
        <topology evidence="1">Peripheral membrane protein</topology>
        <orientation evidence="1">Cytoplasmic side</orientation>
    </subcellularLocation>
</comment>
<comment type="similarity">
    <text evidence="1">Belongs to the complex I 49 kDa subunit family.</text>
</comment>
<reference key="1">
    <citation type="journal article" date="2007" name="Nat. Biotechnol.">
        <title>Complete genome sequence of the fish pathogen Flavobacterium psychrophilum.</title>
        <authorList>
            <person name="Duchaud E."/>
            <person name="Boussaha M."/>
            <person name="Loux V."/>
            <person name="Bernardet J.-F."/>
            <person name="Michel C."/>
            <person name="Kerouault B."/>
            <person name="Mondot S."/>
            <person name="Nicolas P."/>
            <person name="Bossy R."/>
            <person name="Caron C."/>
            <person name="Bessieres P."/>
            <person name="Gibrat J.-F."/>
            <person name="Claverol S."/>
            <person name="Dumetz F."/>
            <person name="Le Henaff M."/>
            <person name="Benmansour A."/>
        </authorList>
    </citation>
    <scope>NUCLEOTIDE SEQUENCE [LARGE SCALE GENOMIC DNA]</scope>
    <source>
        <strain>ATCC 49511 / DSM 21280 / CIP 103535 / JIP02/86</strain>
    </source>
</reference>
<gene>
    <name evidence="1" type="primary">nuoD</name>
    <name type="ordered locus">FP2229</name>
</gene>
<name>NUOD_FLAPJ</name>
<feature type="chain" id="PRO_0000357815" description="NADH-quinone oxidoreductase subunit D">
    <location>
        <begin position="1"/>
        <end position="412"/>
    </location>
</feature>
<evidence type="ECO:0000255" key="1">
    <source>
        <dbReference type="HAMAP-Rule" id="MF_01358"/>
    </source>
</evidence>
<accession>A6H1R1</accession>
<sequence>MSELLLPPEHRYAKIIKEKLNEDGSELSILNLGPTHPATHGIFQNILLMDGERIVDAEPTIGYIHRAFEKIAENRPFYQITPLTDRMNYCSSPINNMAWWMTLEKLLDIEVPKRAQYLRVIVMELARITDHIICNSILGVDTGAYTGFLYVFQFREKIYEIYEEICGARLTTNMGRIGGFERDWSPKAFQLLNTFLEEFPIAWKEFENLFERNRIFIDRTVNVGAISAEKAMAYGFTGPNLRAAGIDYDVRVAEPYSSYEDFEFIIPVGKSGDTYDRFCVRNAEVWESLSIIRQALAKMPEGNVYHAEVPDYYLPPKEDVYHNMESLIYHFKIVMGEVPVPVAEIYHAVEGGNGELGFYLTTDGSRTPYRLHFRRPCFIYYQAYPEMIKGALLSDAIVILSSLNVIAGELDA</sequence>
<organism>
    <name type="scientific">Flavobacterium psychrophilum (strain ATCC 49511 / DSM 21280 / CIP 103535 / JIP02/86)</name>
    <dbReference type="NCBI Taxonomy" id="402612"/>
    <lineage>
        <taxon>Bacteria</taxon>
        <taxon>Pseudomonadati</taxon>
        <taxon>Bacteroidota</taxon>
        <taxon>Flavobacteriia</taxon>
        <taxon>Flavobacteriales</taxon>
        <taxon>Flavobacteriaceae</taxon>
        <taxon>Flavobacterium</taxon>
    </lineage>
</organism>
<proteinExistence type="inferred from homology"/>
<keyword id="KW-0997">Cell inner membrane</keyword>
<keyword id="KW-1003">Cell membrane</keyword>
<keyword id="KW-0472">Membrane</keyword>
<keyword id="KW-0520">NAD</keyword>
<keyword id="KW-0874">Quinone</keyword>
<keyword id="KW-1185">Reference proteome</keyword>
<keyword id="KW-1278">Translocase</keyword>
<keyword id="KW-0813">Transport</keyword>
<dbReference type="EC" id="7.1.1.-" evidence="1"/>
<dbReference type="EMBL" id="AM398681">
    <property type="protein sequence ID" value="CAL44285.1"/>
    <property type="molecule type" value="Genomic_DNA"/>
</dbReference>
<dbReference type="RefSeq" id="WP_011964319.1">
    <property type="nucleotide sequence ID" value="NC_009613.3"/>
</dbReference>
<dbReference type="RefSeq" id="YP_001297086.1">
    <property type="nucleotide sequence ID" value="NC_009613.3"/>
</dbReference>
<dbReference type="SMR" id="A6H1R1"/>
<dbReference type="STRING" id="402612.FP2229"/>
<dbReference type="EnsemblBacteria" id="CAL44285">
    <property type="protein sequence ID" value="CAL44285"/>
    <property type="gene ID" value="FP2229"/>
</dbReference>
<dbReference type="KEGG" id="fps:FP2229"/>
<dbReference type="PATRIC" id="fig|402612.5.peg.2279"/>
<dbReference type="eggNOG" id="COG0649">
    <property type="taxonomic scope" value="Bacteria"/>
</dbReference>
<dbReference type="HOGENOM" id="CLU_015134_1_2_10"/>
<dbReference type="OrthoDB" id="9801496at2"/>
<dbReference type="Proteomes" id="UP000006394">
    <property type="component" value="Chromosome"/>
</dbReference>
<dbReference type="GO" id="GO:0005886">
    <property type="term" value="C:plasma membrane"/>
    <property type="evidence" value="ECO:0007669"/>
    <property type="project" value="UniProtKB-SubCell"/>
</dbReference>
<dbReference type="GO" id="GO:0051287">
    <property type="term" value="F:NAD binding"/>
    <property type="evidence" value="ECO:0007669"/>
    <property type="project" value="InterPro"/>
</dbReference>
<dbReference type="GO" id="GO:0050136">
    <property type="term" value="F:NADH:ubiquinone reductase (non-electrogenic) activity"/>
    <property type="evidence" value="ECO:0007669"/>
    <property type="project" value="UniProtKB-UniRule"/>
</dbReference>
<dbReference type="GO" id="GO:0048038">
    <property type="term" value="F:quinone binding"/>
    <property type="evidence" value="ECO:0007669"/>
    <property type="project" value="UniProtKB-KW"/>
</dbReference>
<dbReference type="Gene3D" id="1.10.645.10">
    <property type="entry name" value="Cytochrome-c3 Hydrogenase, chain B"/>
    <property type="match status" value="1"/>
</dbReference>
<dbReference type="HAMAP" id="MF_01358">
    <property type="entry name" value="NDH1_NuoD"/>
    <property type="match status" value="1"/>
</dbReference>
<dbReference type="InterPro" id="IPR001135">
    <property type="entry name" value="NADH_Q_OxRdtase_suD"/>
</dbReference>
<dbReference type="InterPro" id="IPR014029">
    <property type="entry name" value="NADH_UbQ_OxRdtase_49kDa_CS"/>
</dbReference>
<dbReference type="InterPro" id="IPR022885">
    <property type="entry name" value="NDH1_su_D/H"/>
</dbReference>
<dbReference type="InterPro" id="IPR029014">
    <property type="entry name" value="NiFe-Hase_large"/>
</dbReference>
<dbReference type="NCBIfam" id="NF004739">
    <property type="entry name" value="PRK06075.1"/>
    <property type="match status" value="1"/>
</dbReference>
<dbReference type="PANTHER" id="PTHR11993:SF10">
    <property type="entry name" value="NADH DEHYDROGENASE [UBIQUINONE] IRON-SULFUR PROTEIN 2, MITOCHONDRIAL"/>
    <property type="match status" value="1"/>
</dbReference>
<dbReference type="PANTHER" id="PTHR11993">
    <property type="entry name" value="NADH-UBIQUINONE OXIDOREDUCTASE 49 KDA SUBUNIT"/>
    <property type="match status" value="1"/>
</dbReference>
<dbReference type="Pfam" id="PF00346">
    <property type="entry name" value="Complex1_49kDa"/>
    <property type="match status" value="1"/>
</dbReference>
<dbReference type="SUPFAM" id="SSF56762">
    <property type="entry name" value="HydB/Nqo4-like"/>
    <property type="match status" value="1"/>
</dbReference>
<dbReference type="PROSITE" id="PS00535">
    <property type="entry name" value="COMPLEX1_49K"/>
    <property type="match status" value="1"/>
</dbReference>
<protein>
    <recommendedName>
        <fullName evidence="1">NADH-quinone oxidoreductase subunit D</fullName>
        <ecNumber evidence="1">7.1.1.-</ecNumber>
    </recommendedName>
    <alternativeName>
        <fullName evidence="1">NADH dehydrogenase I subunit D</fullName>
    </alternativeName>
    <alternativeName>
        <fullName evidence="1">NDH-1 subunit D</fullName>
    </alternativeName>
</protein>